<accession>B1J2Z8</accession>
<protein>
    <recommendedName>
        <fullName evidence="1">S-adenosylmethionine synthase</fullName>
        <shortName evidence="1">AdoMet synthase</shortName>
        <ecNumber evidence="1">2.5.1.6</ecNumber>
    </recommendedName>
    <alternativeName>
        <fullName evidence="1">MAT</fullName>
    </alternativeName>
    <alternativeName>
        <fullName evidence="1">Methionine adenosyltransferase</fullName>
    </alternativeName>
</protein>
<keyword id="KW-0067">ATP-binding</keyword>
<keyword id="KW-0963">Cytoplasm</keyword>
<keyword id="KW-0460">Magnesium</keyword>
<keyword id="KW-0479">Metal-binding</keyword>
<keyword id="KW-0547">Nucleotide-binding</keyword>
<keyword id="KW-0554">One-carbon metabolism</keyword>
<keyword id="KW-0630">Potassium</keyword>
<keyword id="KW-0808">Transferase</keyword>
<sequence>MSEYSLFTSESVSEGHPDKIADQISDAVLDAIITQDKYARVACETLVKTGVAIIAGEVTTSAWVDLEELVRKVIIDIGYNSSDVGFDGATCAVMNIIGKQSVDIAQGVDRSKPEDQGAGDQGLMFGYASNETDVLMPAPICFSHRLVERQAEARKSGLLPWLRPDAKSQVTCRYENGKVVGIDAVVLSTQHNPEVSQKDLQEAVMELIVKHTLPAELLHKDTQYHINPTGNFIIGGPVGDCGLTGRKIIVDSYGGMARHGGGAFSGKDPSKVDRSAAYAGRYVAKNIVAAGLAERCEIQVSYAIGVAQPTSISINTFGTGKVSDDKIIQLVRECFDLRPYAITKMLDLLHPMYQETAAYGHFGRTPQQKTVGDDTFTTFTWERTDRAQSLRDAAGL</sequence>
<comment type="function">
    <text evidence="1">Catalyzes the formation of S-adenosylmethionine (AdoMet) from methionine and ATP. The overall synthetic reaction is composed of two sequential steps, AdoMet formation and the subsequent tripolyphosphate hydrolysis which occurs prior to release of AdoMet from the enzyme.</text>
</comment>
<comment type="catalytic activity">
    <reaction evidence="1">
        <text>L-methionine + ATP + H2O = S-adenosyl-L-methionine + phosphate + diphosphate</text>
        <dbReference type="Rhea" id="RHEA:21080"/>
        <dbReference type="ChEBI" id="CHEBI:15377"/>
        <dbReference type="ChEBI" id="CHEBI:30616"/>
        <dbReference type="ChEBI" id="CHEBI:33019"/>
        <dbReference type="ChEBI" id="CHEBI:43474"/>
        <dbReference type="ChEBI" id="CHEBI:57844"/>
        <dbReference type="ChEBI" id="CHEBI:59789"/>
        <dbReference type="EC" id="2.5.1.6"/>
    </reaction>
</comment>
<comment type="cofactor">
    <cofactor evidence="1">
        <name>Mg(2+)</name>
        <dbReference type="ChEBI" id="CHEBI:18420"/>
    </cofactor>
    <text evidence="1">Binds 2 divalent ions per subunit.</text>
</comment>
<comment type="cofactor">
    <cofactor evidence="1">
        <name>K(+)</name>
        <dbReference type="ChEBI" id="CHEBI:29103"/>
    </cofactor>
    <text evidence="1">Binds 1 potassium ion per subunit.</text>
</comment>
<comment type="pathway">
    <text evidence="1">Amino-acid biosynthesis; S-adenosyl-L-methionine biosynthesis; S-adenosyl-L-methionine from L-methionine: step 1/1.</text>
</comment>
<comment type="subunit">
    <text evidence="1">Homotetramer; dimer of dimers.</text>
</comment>
<comment type="subcellular location">
    <subcellularLocation>
        <location evidence="1">Cytoplasm</location>
    </subcellularLocation>
</comment>
<comment type="similarity">
    <text evidence="1">Belongs to the AdoMet synthase family.</text>
</comment>
<evidence type="ECO:0000255" key="1">
    <source>
        <dbReference type="HAMAP-Rule" id="MF_00086"/>
    </source>
</evidence>
<dbReference type="EC" id="2.5.1.6" evidence="1"/>
<dbReference type="EMBL" id="CP000949">
    <property type="protein sequence ID" value="ACA71004.1"/>
    <property type="molecule type" value="Genomic_DNA"/>
</dbReference>
<dbReference type="SMR" id="B1J2Z8"/>
<dbReference type="STRING" id="390235.PputW619_0499"/>
<dbReference type="KEGG" id="ppw:PputW619_0499"/>
<dbReference type="eggNOG" id="COG0192">
    <property type="taxonomic scope" value="Bacteria"/>
</dbReference>
<dbReference type="HOGENOM" id="CLU_041802_1_1_6"/>
<dbReference type="OrthoDB" id="9801686at2"/>
<dbReference type="UniPathway" id="UPA00315">
    <property type="reaction ID" value="UER00080"/>
</dbReference>
<dbReference type="GO" id="GO:0005737">
    <property type="term" value="C:cytoplasm"/>
    <property type="evidence" value="ECO:0007669"/>
    <property type="project" value="UniProtKB-SubCell"/>
</dbReference>
<dbReference type="GO" id="GO:0005524">
    <property type="term" value="F:ATP binding"/>
    <property type="evidence" value="ECO:0007669"/>
    <property type="project" value="UniProtKB-UniRule"/>
</dbReference>
<dbReference type="GO" id="GO:0000287">
    <property type="term" value="F:magnesium ion binding"/>
    <property type="evidence" value="ECO:0007669"/>
    <property type="project" value="UniProtKB-UniRule"/>
</dbReference>
<dbReference type="GO" id="GO:0004478">
    <property type="term" value="F:methionine adenosyltransferase activity"/>
    <property type="evidence" value="ECO:0007669"/>
    <property type="project" value="UniProtKB-UniRule"/>
</dbReference>
<dbReference type="GO" id="GO:0006730">
    <property type="term" value="P:one-carbon metabolic process"/>
    <property type="evidence" value="ECO:0007669"/>
    <property type="project" value="UniProtKB-KW"/>
</dbReference>
<dbReference type="GO" id="GO:0006556">
    <property type="term" value="P:S-adenosylmethionine biosynthetic process"/>
    <property type="evidence" value="ECO:0007669"/>
    <property type="project" value="UniProtKB-UniRule"/>
</dbReference>
<dbReference type="CDD" id="cd18079">
    <property type="entry name" value="S-AdoMet_synt"/>
    <property type="match status" value="1"/>
</dbReference>
<dbReference type="FunFam" id="3.30.300.10:FF:000003">
    <property type="entry name" value="S-adenosylmethionine synthase"/>
    <property type="match status" value="1"/>
</dbReference>
<dbReference type="Gene3D" id="3.30.300.10">
    <property type="match status" value="3"/>
</dbReference>
<dbReference type="HAMAP" id="MF_00086">
    <property type="entry name" value="S_AdoMet_synth1"/>
    <property type="match status" value="1"/>
</dbReference>
<dbReference type="InterPro" id="IPR022631">
    <property type="entry name" value="ADOMET_SYNTHASE_CS"/>
</dbReference>
<dbReference type="InterPro" id="IPR022630">
    <property type="entry name" value="S-AdoMet_synt_C"/>
</dbReference>
<dbReference type="InterPro" id="IPR022629">
    <property type="entry name" value="S-AdoMet_synt_central"/>
</dbReference>
<dbReference type="InterPro" id="IPR022628">
    <property type="entry name" value="S-AdoMet_synt_N"/>
</dbReference>
<dbReference type="InterPro" id="IPR002133">
    <property type="entry name" value="S-AdoMet_synthetase"/>
</dbReference>
<dbReference type="InterPro" id="IPR022636">
    <property type="entry name" value="S-AdoMet_synthetase_sfam"/>
</dbReference>
<dbReference type="NCBIfam" id="TIGR01034">
    <property type="entry name" value="metK"/>
    <property type="match status" value="1"/>
</dbReference>
<dbReference type="PANTHER" id="PTHR11964">
    <property type="entry name" value="S-ADENOSYLMETHIONINE SYNTHETASE"/>
    <property type="match status" value="1"/>
</dbReference>
<dbReference type="Pfam" id="PF02773">
    <property type="entry name" value="S-AdoMet_synt_C"/>
    <property type="match status" value="1"/>
</dbReference>
<dbReference type="Pfam" id="PF02772">
    <property type="entry name" value="S-AdoMet_synt_M"/>
    <property type="match status" value="1"/>
</dbReference>
<dbReference type="Pfam" id="PF00438">
    <property type="entry name" value="S-AdoMet_synt_N"/>
    <property type="match status" value="1"/>
</dbReference>
<dbReference type="PIRSF" id="PIRSF000497">
    <property type="entry name" value="MAT"/>
    <property type="match status" value="1"/>
</dbReference>
<dbReference type="SUPFAM" id="SSF55973">
    <property type="entry name" value="S-adenosylmethionine synthetase"/>
    <property type="match status" value="3"/>
</dbReference>
<dbReference type="PROSITE" id="PS00376">
    <property type="entry name" value="ADOMET_SYNTHASE_1"/>
    <property type="match status" value="1"/>
</dbReference>
<dbReference type="PROSITE" id="PS00377">
    <property type="entry name" value="ADOMET_SYNTHASE_2"/>
    <property type="match status" value="1"/>
</dbReference>
<organism>
    <name type="scientific">Pseudomonas putida (strain W619)</name>
    <dbReference type="NCBI Taxonomy" id="390235"/>
    <lineage>
        <taxon>Bacteria</taxon>
        <taxon>Pseudomonadati</taxon>
        <taxon>Pseudomonadota</taxon>
        <taxon>Gammaproteobacteria</taxon>
        <taxon>Pseudomonadales</taxon>
        <taxon>Pseudomonadaceae</taxon>
        <taxon>Pseudomonas</taxon>
    </lineage>
</organism>
<name>METK_PSEPW</name>
<gene>
    <name evidence="1" type="primary">metK</name>
    <name type="ordered locus">PputW619_0499</name>
</gene>
<feature type="chain" id="PRO_1000093074" description="S-adenosylmethionine synthase">
    <location>
        <begin position="1"/>
        <end position="396"/>
    </location>
</feature>
<feature type="region of interest" description="Flexible loop" evidence="1">
    <location>
        <begin position="100"/>
        <end position="110"/>
    </location>
</feature>
<feature type="binding site" description="in other chain" evidence="1">
    <location>
        <position position="16"/>
    </location>
    <ligand>
        <name>ATP</name>
        <dbReference type="ChEBI" id="CHEBI:30616"/>
        <note>ligand shared between two neighboring subunits</note>
    </ligand>
</feature>
<feature type="binding site" evidence="1">
    <location>
        <position position="18"/>
    </location>
    <ligand>
        <name>Mg(2+)</name>
        <dbReference type="ChEBI" id="CHEBI:18420"/>
    </ligand>
</feature>
<feature type="binding site" evidence="1">
    <location>
        <position position="44"/>
    </location>
    <ligand>
        <name>K(+)</name>
        <dbReference type="ChEBI" id="CHEBI:29103"/>
    </ligand>
</feature>
<feature type="binding site" description="in other chain" evidence="1">
    <location>
        <position position="57"/>
    </location>
    <ligand>
        <name>L-methionine</name>
        <dbReference type="ChEBI" id="CHEBI:57844"/>
        <note>ligand shared between two neighboring subunits</note>
    </ligand>
</feature>
<feature type="binding site" description="in other chain" evidence="1">
    <location>
        <position position="100"/>
    </location>
    <ligand>
        <name>L-methionine</name>
        <dbReference type="ChEBI" id="CHEBI:57844"/>
        <note>ligand shared between two neighboring subunits</note>
    </ligand>
</feature>
<feature type="binding site" description="in other chain" evidence="1">
    <location>
        <begin position="165"/>
        <end position="167"/>
    </location>
    <ligand>
        <name>ATP</name>
        <dbReference type="ChEBI" id="CHEBI:30616"/>
        <note>ligand shared between two neighboring subunits</note>
    </ligand>
</feature>
<feature type="binding site" evidence="1">
    <location>
        <position position="240"/>
    </location>
    <ligand>
        <name>ATP</name>
        <dbReference type="ChEBI" id="CHEBI:30616"/>
        <note>ligand shared between two neighboring subunits</note>
    </ligand>
</feature>
<feature type="binding site" evidence="1">
    <location>
        <position position="240"/>
    </location>
    <ligand>
        <name>L-methionine</name>
        <dbReference type="ChEBI" id="CHEBI:57844"/>
        <note>ligand shared between two neighboring subunits</note>
    </ligand>
</feature>
<feature type="binding site" description="in other chain" evidence="1">
    <location>
        <begin position="246"/>
        <end position="247"/>
    </location>
    <ligand>
        <name>ATP</name>
        <dbReference type="ChEBI" id="CHEBI:30616"/>
        <note>ligand shared between two neighboring subunits</note>
    </ligand>
</feature>
<feature type="binding site" evidence="1">
    <location>
        <position position="263"/>
    </location>
    <ligand>
        <name>ATP</name>
        <dbReference type="ChEBI" id="CHEBI:30616"/>
        <note>ligand shared between two neighboring subunits</note>
    </ligand>
</feature>
<feature type="binding site" evidence="1">
    <location>
        <position position="267"/>
    </location>
    <ligand>
        <name>ATP</name>
        <dbReference type="ChEBI" id="CHEBI:30616"/>
        <note>ligand shared between two neighboring subunits</note>
    </ligand>
</feature>
<feature type="binding site" description="in other chain" evidence="1">
    <location>
        <position position="271"/>
    </location>
    <ligand>
        <name>L-methionine</name>
        <dbReference type="ChEBI" id="CHEBI:57844"/>
        <note>ligand shared between two neighboring subunits</note>
    </ligand>
</feature>
<proteinExistence type="inferred from homology"/>
<reference key="1">
    <citation type="submission" date="2008-02" db="EMBL/GenBank/DDBJ databases">
        <title>Complete sequence of Pseudomonas putida W619.</title>
        <authorList>
            <person name="Copeland A."/>
            <person name="Lucas S."/>
            <person name="Lapidus A."/>
            <person name="Barry K."/>
            <person name="Detter J.C."/>
            <person name="Glavina del Rio T."/>
            <person name="Dalin E."/>
            <person name="Tice H."/>
            <person name="Pitluck S."/>
            <person name="Chain P."/>
            <person name="Malfatti S."/>
            <person name="Shin M."/>
            <person name="Vergez L."/>
            <person name="Schmutz J."/>
            <person name="Larimer F."/>
            <person name="Land M."/>
            <person name="Hauser L."/>
            <person name="Kyrpides N."/>
            <person name="Kim E."/>
            <person name="Taghavi S."/>
            <person name="Vangronsveld D."/>
            <person name="van der Lelie D."/>
            <person name="Richardson P."/>
        </authorList>
    </citation>
    <scope>NUCLEOTIDE SEQUENCE [LARGE SCALE GENOMIC DNA]</scope>
    <source>
        <strain>W619</strain>
    </source>
</reference>